<proteinExistence type="inferred from homology"/>
<accession>Q551M3</accession>
<organism>
    <name type="scientific">Dictyostelium discoideum</name>
    <name type="common">Social amoeba</name>
    <dbReference type="NCBI Taxonomy" id="44689"/>
    <lineage>
        <taxon>Eukaryota</taxon>
        <taxon>Amoebozoa</taxon>
        <taxon>Evosea</taxon>
        <taxon>Eumycetozoa</taxon>
        <taxon>Dictyostelia</taxon>
        <taxon>Dictyosteliales</taxon>
        <taxon>Dictyosteliaceae</taxon>
        <taxon>Dictyostelium</taxon>
    </lineage>
</organism>
<name>TRMB_DICDI</name>
<dbReference type="EC" id="2.1.1.33" evidence="1"/>
<dbReference type="EMBL" id="AAFI02000015">
    <property type="protein sequence ID" value="EAL69199.1"/>
    <property type="molecule type" value="Genomic_DNA"/>
</dbReference>
<dbReference type="RefSeq" id="XP_643107.1">
    <property type="nucleotide sequence ID" value="XM_638015.1"/>
</dbReference>
<dbReference type="SMR" id="Q551M3"/>
<dbReference type="FunCoup" id="Q551M3">
    <property type="interactions" value="286"/>
</dbReference>
<dbReference type="STRING" id="44689.Q551M3"/>
<dbReference type="PaxDb" id="44689-DDB0238339"/>
<dbReference type="EnsemblProtists" id="EAL69199">
    <property type="protein sequence ID" value="EAL69199"/>
    <property type="gene ID" value="DDB_G0276491"/>
</dbReference>
<dbReference type="GeneID" id="8620511"/>
<dbReference type="KEGG" id="ddi:DDB_G0276491"/>
<dbReference type="dictyBase" id="DDB_G0276491">
    <property type="gene designation" value="mettl1"/>
</dbReference>
<dbReference type="VEuPathDB" id="AmoebaDB:DDB_G0276491"/>
<dbReference type="eggNOG" id="KOG3115">
    <property type="taxonomic scope" value="Eukaryota"/>
</dbReference>
<dbReference type="HOGENOM" id="CLU_050910_3_0_1"/>
<dbReference type="InParanoid" id="Q551M3"/>
<dbReference type="OMA" id="LPNYFAK"/>
<dbReference type="PhylomeDB" id="Q551M3"/>
<dbReference type="UniPathway" id="UPA00989"/>
<dbReference type="PRO" id="PR:Q551M3"/>
<dbReference type="Proteomes" id="UP000002195">
    <property type="component" value="Chromosome 2"/>
</dbReference>
<dbReference type="GO" id="GO:0005634">
    <property type="term" value="C:nucleus"/>
    <property type="evidence" value="ECO:0007669"/>
    <property type="project" value="UniProtKB-SubCell"/>
</dbReference>
<dbReference type="GO" id="GO:0043527">
    <property type="term" value="C:tRNA methyltransferase complex"/>
    <property type="evidence" value="ECO:0000318"/>
    <property type="project" value="GO_Central"/>
</dbReference>
<dbReference type="GO" id="GO:0008176">
    <property type="term" value="F:tRNA (guanine(46)-N7)-methyltransferase activity"/>
    <property type="evidence" value="ECO:0000250"/>
    <property type="project" value="dictyBase"/>
</dbReference>
<dbReference type="GO" id="GO:0000049">
    <property type="term" value="F:tRNA binding"/>
    <property type="evidence" value="ECO:0007669"/>
    <property type="project" value="UniProtKB-UniRule"/>
</dbReference>
<dbReference type="GO" id="GO:0036265">
    <property type="term" value="P:RNA (guanine-N7)-methylation"/>
    <property type="evidence" value="ECO:0000318"/>
    <property type="project" value="GO_Central"/>
</dbReference>
<dbReference type="GO" id="GO:0030488">
    <property type="term" value="P:tRNA methylation"/>
    <property type="evidence" value="ECO:0000318"/>
    <property type="project" value="GO_Central"/>
</dbReference>
<dbReference type="CDD" id="cd02440">
    <property type="entry name" value="AdoMet_MTases"/>
    <property type="match status" value="1"/>
</dbReference>
<dbReference type="FunFam" id="3.40.50.150:FF:000309">
    <property type="entry name" value="tRNA (guanine-N(7)-)-methyltransferase"/>
    <property type="match status" value="1"/>
</dbReference>
<dbReference type="Gene3D" id="3.40.50.150">
    <property type="entry name" value="Vaccinia Virus protein VP39"/>
    <property type="match status" value="1"/>
</dbReference>
<dbReference type="HAMAP" id="MF_03055">
    <property type="entry name" value="tRNA_methyltr_TrmB_euk"/>
    <property type="match status" value="1"/>
</dbReference>
<dbReference type="InterPro" id="IPR029063">
    <property type="entry name" value="SAM-dependent_MTases_sf"/>
</dbReference>
<dbReference type="InterPro" id="IPR025763">
    <property type="entry name" value="Trm8_euk"/>
</dbReference>
<dbReference type="InterPro" id="IPR003358">
    <property type="entry name" value="tRNA_(Gua-N-7)_MeTrfase_Trmb"/>
</dbReference>
<dbReference type="NCBIfam" id="TIGR00091">
    <property type="entry name" value="tRNA (guanosine(46)-N7)-methyltransferase TrmB"/>
    <property type="match status" value="1"/>
</dbReference>
<dbReference type="PANTHER" id="PTHR23417">
    <property type="entry name" value="3-DEOXY-D-MANNO-OCTULOSONIC-ACID TRANSFERASE/TRNA GUANINE-N 7 - -METHYLTRANSFERASE"/>
    <property type="match status" value="1"/>
</dbReference>
<dbReference type="PANTHER" id="PTHR23417:SF16">
    <property type="entry name" value="TRNA (GUANINE-N(7)-)-METHYLTRANSFERASE"/>
    <property type="match status" value="1"/>
</dbReference>
<dbReference type="Pfam" id="PF02390">
    <property type="entry name" value="Methyltransf_4"/>
    <property type="match status" value="1"/>
</dbReference>
<dbReference type="SUPFAM" id="SSF53335">
    <property type="entry name" value="S-adenosyl-L-methionine-dependent methyltransferases"/>
    <property type="match status" value="1"/>
</dbReference>
<dbReference type="PROSITE" id="PS51625">
    <property type="entry name" value="SAM_MT_TRMB"/>
    <property type="match status" value="1"/>
</dbReference>
<gene>
    <name type="primary">mettl1</name>
    <name type="ORF">DDB_G0276491</name>
</gene>
<keyword id="KW-0489">Methyltransferase</keyword>
<keyword id="KW-0539">Nucleus</keyword>
<keyword id="KW-1185">Reference proteome</keyword>
<keyword id="KW-0694">RNA-binding</keyword>
<keyword id="KW-0949">S-adenosyl-L-methionine</keyword>
<keyword id="KW-0808">Transferase</keyword>
<keyword id="KW-0819">tRNA processing</keyword>
<keyword id="KW-0820">tRNA-binding</keyword>
<protein>
    <recommendedName>
        <fullName evidence="1">tRNA (guanine-N(7)-)-methyltransferase</fullName>
        <ecNumber evidence="1">2.1.1.33</ecNumber>
    </recommendedName>
    <alternativeName>
        <fullName evidence="1">Methyltransferase-like protein 1 homolog</fullName>
    </alternativeName>
    <alternativeName>
        <fullName evidence="1">tRNA (guanine(46)-N(7))-methyltransferase</fullName>
    </alternativeName>
    <alternativeName>
        <fullName evidence="1">tRNA(m7G46)-methyltransferase</fullName>
    </alternativeName>
</protein>
<sequence length="278" mass="32423">MVYQKQEPKKKKAIKPYHRIKAHANPASDYNFYYPTGPESYDWTKNYPQQAMNEKKVEIADVGCGYGGLLISLSSLFPERLSVGMELRDKVVQYVEERIDKLREKHVGQFQNISVIRTNAMKYLPNYFEKGQLQKIFFLFPDPHFKKATHKRRIISPTLLSEYAYILAPGAYAYFISDVEELYLWMFEHFKNHPLFEQVERDIAENDSCIPLIVNSTEEGRKVNRIDGKKWFAVFRRITDPSKKDLTFKNYTLTSPKEIDSTTTTTTSTATITEVESK</sequence>
<comment type="function">
    <text evidence="1">Catalyzes the formation of N(7)-methylguanine at position 46 (m7G46) in tRNA.</text>
</comment>
<comment type="catalytic activity">
    <reaction evidence="1">
        <text>guanosine(46) in tRNA + S-adenosyl-L-methionine = N(7)-methylguanosine(46) in tRNA + S-adenosyl-L-homocysteine</text>
        <dbReference type="Rhea" id="RHEA:42708"/>
        <dbReference type="Rhea" id="RHEA-COMP:10188"/>
        <dbReference type="Rhea" id="RHEA-COMP:10189"/>
        <dbReference type="ChEBI" id="CHEBI:57856"/>
        <dbReference type="ChEBI" id="CHEBI:59789"/>
        <dbReference type="ChEBI" id="CHEBI:74269"/>
        <dbReference type="ChEBI" id="CHEBI:74480"/>
        <dbReference type="EC" id="2.1.1.33"/>
    </reaction>
</comment>
<comment type="pathway">
    <text evidence="1">tRNA modification; N(7)-methylguanine-tRNA biosynthesis.</text>
</comment>
<comment type="subcellular location">
    <subcellularLocation>
        <location evidence="1">Nucleus</location>
    </subcellularLocation>
</comment>
<comment type="similarity">
    <text evidence="1">Belongs to the class I-like SAM-binding methyltransferase superfamily. TrmB family.</text>
</comment>
<reference key="1">
    <citation type="journal article" date="2002" name="Nature">
        <title>Sequence and analysis of chromosome 2 of Dictyostelium discoideum.</title>
        <authorList>
            <person name="Gloeckner G."/>
            <person name="Eichinger L."/>
            <person name="Szafranski K."/>
            <person name="Pachebat J.A."/>
            <person name="Bankier A.T."/>
            <person name="Dear P.H."/>
            <person name="Lehmann R."/>
            <person name="Baumgart C."/>
            <person name="Parra G."/>
            <person name="Abril J.F."/>
            <person name="Guigo R."/>
            <person name="Kumpf K."/>
            <person name="Tunggal B."/>
            <person name="Cox E.C."/>
            <person name="Quail M.A."/>
            <person name="Platzer M."/>
            <person name="Rosenthal A."/>
            <person name="Noegel A.A."/>
        </authorList>
    </citation>
    <scope>NUCLEOTIDE SEQUENCE [LARGE SCALE GENOMIC DNA]</scope>
    <source>
        <strain>AX4</strain>
    </source>
</reference>
<reference key="2">
    <citation type="journal article" date="2005" name="Nature">
        <title>The genome of the social amoeba Dictyostelium discoideum.</title>
        <authorList>
            <person name="Eichinger L."/>
            <person name="Pachebat J.A."/>
            <person name="Gloeckner G."/>
            <person name="Rajandream M.A."/>
            <person name="Sucgang R."/>
            <person name="Berriman M."/>
            <person name="Song J."/>
            <person name="Olsen R."/>
            <person name="Szafranski K."/>
            <person name="Xu Q."/>
            <person name="Tunggal B."/>
            <person name="Kummerfeld S."/>
            <person name="Madera M."/>
            <person name="Konfortov B.A."/>
            <person name="Rivero F."/>
            <person name="Bankier A.T."/>
            <person name="Lehmann R."/>
            <person name="Hamlin N."/>
            <person name="Davies R."/>
            <person name="Gaudet P."/>
            <person name="Fey P."/>
            <person name="Pilcher K."/>
            <person name="Chen G."/>
            <person name="Saunders D."/>
            <person name="Sodergren E.J."/>
            <person name="Davis P."/>
            <person name="Kerhornou A."/>
            <person name="Nie X."/>
            <person name="Hall N."/>
            <person name="Anjard C."/>
            <person name="Hemphill L."/>
            <person name="Bason N."/>
            <person name="Farbrother P."/>
            <person name="Desany B."/>
            <person name="Just E."/>
            <person name="Morio T."/>
            <person name="Rost R."/>
            <person name="Churcher C.M."/>
            <person name="Cooper J."/>
            <person name="Haydock S."/>
            <person name="van Driessche N."/>
            <person name="Cronin A."/>
            <person name="Goodhead I."/>
            <person name="Muzny D.M."/>
            <person name="Mourier T."/>
            <person name="Pain A."/>
            <person name="Lu M."/>
            <person name="Harper D."/>
            <person name="Lindsay R."/>
            <person name="Hauser H."/>
            <person name="James K.D."/>
            <person name="Quiles M."/>
            <person name="Madan Babu M."/>
            <person name="Saito T."/>
            <person name="Buchrieser C."/>
            <person name="Wardroper A."/>
            <person name="Felder M."/>
            <person name="Thangavelu M."/>
            <person name="Johnson D."/>
            <person name="Knights A."/>
            <person name="Loulseged H."/>
            <person name="Mungall K.L."/>
            <person name="Oliver K."/>
            <person name="Price C."/>
            <person name="Quail M.A."/>
            <person name="Urushihara H."/>
            <person name="Hernandez J."/>
            <person name="Rabbinowitsch E."/>
            <person name="Steffen D."/>
            <person name="Sanders M."/>
            <person name="Ma J."/>
            <person name="Kohara Y."/>
            <person name="Sharp S."/>
            <person name="Simmonds M.N."/>
            <person name="Spiegler S."/>
            <person name="Tivey A."/>
            <person name="Sugano S."/>
            <person name="White B."/>
            <person name="Walker D."/>
            <person name="Woodward J.R."/>
            <person name="Winckler T."/>
            <person name="Tanaka Y."/>
            <person name="Shaulsky G."/>
            <person name="Schleicher M."/>
            <person name="Weinstock G.M."/>
            <person name="Rosenthal A."/>
            <person name="Cox E.C."/>
            <person name="Chisholm R.L."/>
            <person name="Gibbs R.A."/>
            <person name="Loomis W.F."/>
            <person name="Platzer M."/>
            <person name="Kay R.R."/>
            <person name="Williams J.G."/>
            <person name="Dear P.H."/>
            <person name="Noegel A.A."/>
            <person name="Barrell B.G."/>
            <person name="Kuspa A."/>
        </authorList>
    </citation>
    <scope>NUCLEOTIDE SEQUENCE [LARGE SCALE GENOMIC DNA]</scope>
    <source>
        <strain>AX4</strain>
    </source>
</reference>
<evidence type="ECO:0000255" key="1">
    <source>
        <dbReference type="HAMAP-Rule" id="MF_03055"/>
    </source>
</evidence>
<evidence type="ECO:0000256" key="2">
    <source>
        <dbReference type="SAM" id="MobiDB-lite"/>
    </source>
</evidence>
<feature type="chain" id="PRO_0000370579" description="tRNA (guanine-N(7)-)-methyltransferase">
    <location>
        <begin position="1"/>
        <end position="278"/>
    </location>
</feature>
<feature type="region of interest" description="Disordered" evidence="2">
    <location>
        <begin position="259"/>
        <end position="278"/>
    </location>
</feature>
<feature type="compositionally biased region" description="Low complexity" evidence="2">
    <location>
        <begin position="261"/>
        <end position="278"/>
    </location>
</feature>
<feature type="active site" evidence="1">
    <location>
        <position position="142"/>
    </location>
</feature>
<feature type="binding site" evidence="1">
    <location>
        <position position="63"/>
    </location>
    <ligand>
        <name>S-adenosyl-L-methionine</name>
        <dbReference type="ChEBI" id="CHEBI:59789"/>
    </ligand>
</feature>
<feature type="binding site" evidence="1">
    <location>
        <begin position="86"/>
        <end position="87"/>
    </location>
    <ligand>
        <name>S-adenosyl-L-methionine</name>
        <dbReference type="ChEBI" id="CHEBI:59789"/>
    </ligand>
</feature>
<feature type="binding site" evidence="1">
    <location>
        <begin position="119"/>
        <end position="120"/>
    </location>
    <ligand>
        <name>S-adenosyl-L-methionine</name>
        <dbReference type="ChEBI" id="CHEBI:59789"/>
    </ligand>
</feature>
<feature type="binding site" evidence="1">
    <location>
        <position position="139"/>
    </location>
    <ligand>
        <name>S-adenosyl-L-methionine</name>
        <dbReference type="ChEBI" id="CHEBI:59789"/>
    </ligand>
</feature>
<feature type="binding site" evidence="1">
    <location>
        <begin position="217"/>
        <end position="219"/>
    </location>
    <ligand>
        <name>S-adenosyl-L-methionine</name>
        <dbReference type="ChEBI" id="CHEBI:59789"/>
    </ligand>
</feature>